<feature type="chain" id="PRO_1000005649" description="Beta-hexosaminidase">
    <location>
        <begin position="1"/>
        <end position="345"/>
    </location>
</feature>
<feature type="active site" description="Proton donor/acceptor" evidence="1">
    <location>
        <position position="175"/>
    </location>
</feature>
<feature type="active site" description="Nucleophile" evidence="1">
    <location>
        <position position="247"/>
    </location>
</feature>
<feature type="binding site" evidence="1">
    <location>
        <position position="60"/>
    </location>
    <ligand>
        <name>substrate</name>
    </ligand>
</feature>
<feature type="binding site" evidence="1">
    <location>
        <position position="68"/>
    </location>
    <ligand>
        <name>substrate</name>
    </ligand>
</feature>
<feature type="binding site" evidence="1">
    <location>
        <position position="132"/>
    </location>
    <ligand>
        <name>substrate</name>
    </ligand>
</feature>
<feature type="binding site" evidence="1">
    <location>
        <begin position="162"/>
        <end position="163"/>
    </location>
    <ligand>
        <name>substrate</name>
    </ligand>
</feature>
<feature type="site" description="Important for catalytic activity" evidence="1">
    <location>
        <position position="173"/>
    </location>
</feature>
<dbReference type="EC" id="3.2.1.52" evidence="1"/>
<dbReference type="EMBL" id="CP000569">
    <property type="protein sequence ID" value="ABN74203.1"/>
    <property type="molecule type" value="Genomic_DNA"/>
</dbReference>
<dbReference type="RefSeq" id="WP_011848533.1">
    <property type="nucleotide sequence ID" value="NC_009053.1"/>
</dbReference>
<dbReference type="SMR" id="A3N1B7"/>
<dbReference type="STRING" id="416269.APL_1111"/>
<dbReference type="CAZy" id="GH3">
    <property type="family name" value="Glycoside Hydrolase Family 3"/>
</dbReference>
<dbReference type="EnsemblBacteria" id="ABN74203">
    <property type="protein sequence ID" value="ABN74203"/>
    <property type="gene ID" value="APL_1111"/>
</dbReference>
<dbReference type="KEGG" id="apl:APL_1111"/>
<dbReference type="eggNOG" id="COG1472">
    <property type="taxonomic scope" value="Bacteria"/>
</dbReference>
<dbReference type="HOGENOM" id="CLU_008392_0_0_6"/>
<dbReference type="UniPathway" id="UPA00544"/>
<dbReference type="Proteomes" id="UP000001432">
    <property type="component" value="Chromosome"/>
</dbReference>
<dbReference type="GO" id="GO:0005737">
    <property type="term" value="C:cytoplasm"/>
    <property type="evidence" value="ECO:0007669"/>
    <property type="project" value="UniProtKB-SubCell"/>
</dbReference>
<dbReference type="GO" id="GO:0004563">
    <property type="term" value="F:beta-N-acetylhexosaminidase activity"/>
    <property type="evidence" value="ECO:0007669"/>
    <property type="project" value="UniProtKB-UniRule"/>
</dbReference>
<dbReference type="GO" id="GO:0005975">
    <property type="term" value="P:carbohydrate metabolic process"/>
    <property type="evidence" value="ECO:0007669"/>
    <property type="project" value="InterPro"/>
</dbReference>
<dbReference type="GO" id="GO:0051301">
    <property type="term" value="P:cell division"/>
    <property type="evidence" value="ECO:0007669"/>
    <property type="project" value="UniProtKB-KW"/>
</dbReference>
<dbReference type="GO" id="GO:0071555">
    <property type="term" value="P:cell wall organization"/>
    <property type="evidence" value="ECO:0007669"/>
    <property type="project" value="UniProtKB-KW"/>
</dbReference>
<dbReference type="GO" id="GO:0009252">
    <property type="term" value="P:peptidoglycan biosynthetic process"/>
    <property type="evidence" value="ECO:0007669"/>
    <property type="project" value="UniProtKB-KW"/>
</dbReference>
<dbReference type="GO" id="GO:0009254">
    <property type="term" value="P:peptidoglycan turnover"/>
    <property type="evidence" value="ECO:0007669"/>
    <property type="project" value="UniProtKB-UniRule"/>
</dbReference>
<dbReference type="GO" id="GO:0008360">
    <property type="term" value="P:regulation of cell shape"/>
    <property type="evidence" value="ECO:0007669"/>
    <property type="project" value="UniProtKB-KW"/>
</dbReference>
<dbReference type="FunFam" id="3.20.20.300:FF:000001">
    <property type="entry name" value="Beta-hexosaminidase"/>
    <property type="match status" value="1"/>
</dbReference>
<dbReference type="Gene3D" id="3.20.20.300">
    <property type="entry name" value="Glycoside hydrolase, family 3, N-terminal domain"/>
    <property type="match status" value="1"/>
</dbReference>
<dbReference type="HAMAP" id="MF_00364">
    <property type="entry name" value="NagZ"/>
    <property type="match status" value="1"/>
</dbReference>
<dbReference type="InterPro" id="IPR022956">
    <property type="entry name" value="Beta_hexosaminidase_bac"/>
</dbReference>
<dbReference type="InterPro" id="IPR019800">
    <property type="entry name" value="Glyco_hydro_3_AS"/>
</dbReference>
<dbReference type="InterPro" id="IPR001764">
    <property type="entry name" value="Glyco_hydro_3_N"/>
</dbReference>
<dbReference type="InterPro" id="IPR036962">
    <property type="entry name" value="Glyco_hydro_3_N_sf"/>
</dbReference>
<dbReference type="InterPro" id="IPR017853">
    <property type="entry name" value="Glycoside_hydrolase_SF"/>
</dbReference>
<dbReference type="InterPro" id="IPR050226">
    <property type="entry name" value="NagZ_Beta-hexosaminidase"/>
</dbReference>
<dbReference type="NCBIfam" id="NF003740">
    <property type="entry name" value="PRK05337.1"/>
    <property type="match status" value="1"/>
</dbReference>
<dbReference type="PANTHER" id="PTHR30480:SF13">
    <property type="entry name" value="BETA-HEXOSAMINIDASE"/>
    <property type="match status" value="1"/>
</dbReference>
<dbReference type="PANTHER" id="PTHR30480">
    <property type="entry name" value="BETA-HEXOSAMINIDASE-RELATED"/>
    <property type="match status" value="1"/>
</dbReference>
<dbReference type="Pfam" id="PF00933">
    <property type="entry name" value="Glyco_hydro_3"/>
    <property type="match status" value="1"/>
</dbReference>
<dbReference type="SUPFAM" id="SSF51445">
    <property type="entry name" value="(Trans)glycosidases"/>
    <property type="match status" value="1"/>
</dbReference>
<dbReference type="PROSITE" id="PS00775">
    <property type="entry name" value="GLYCOSYL_HYDROL_F3"/>
    <property type="match status" value="1"/>
</dbReference>
<accession>A3N1B7</accession>
<comment type="function">
    <text evidence="1">Plays a role in peptidoglycan recycling by cleaving the terminal beta-1,4-linked N-acetylglucosamine (GlcNAc) from peptide-linked peptidoglycan fragments, giving rise to free GlcNAc, anhydro-N-acetylmuramic acid and anhydro-N-acetylmuramic acid-linked peptides.</text>
</comment>
<comment type="catalytic activity">
    <reaction evidence="1">
        <text>Hydrolysis of terminal non-reducing N-acetyl-D-hexosamine residues in N-acetyl-beta-D-hexosaminides.</text>
        <dbReference type="EC" id="3.2.1.52"/>
    </reaction>
</comment>
<comment type="pathway">
    <text evidence="1">Cell wall biogenesis; peptidoglycan recycling.</text>
</comment>
<comment type="subcellular location">
    <subcellularLocation>
        <location evidence="1">Cytoplasm</location>
    </subcellularLocation>
</comment>
<comment type="similarity">
    <text evidence="1">Belongs to the glycosyl hydrolase 3 family. NagZ subfamily.</text>
</comment>
<protein>
    <recommendedName>
        <fullName evidence="1">Beta-hexosaminidase</fullName>
        <ecNumber evidence="1">3.2.1.52</ecNumber>
    </recommendedName>
    <alternativeName>
        <fullName evidence="1">Beta-N-acetylhexosaminidase</fullName>
    </alternativeName>
    <alternativeName>
        <fullName evidence="1">N-acetyl-beta-glucosaminidase</fullName>
    </alternativeName>
</protein>
<organism>
    <name type="scientific">Actinobacillus pleuropneumoniae serotype 5b (strain L20)</name>
    <dbReference type="NCBI Taxonomy" id="416269"/>
    <lineage>
        <taxon>Bacteria</taxon>
        <taxon>Pseudomonadati</taxon>
        <taxon>Pseudomonadota</taxon>
        <taxon>Gammaproteobacteria</taxon>
        <taxon>Pasteurellales</taxon>
        <taxon>Pasteurellaceae</taxon>
        <taxon>Actinobacillus</taxon>
    </lineage>
</organism>
<reference key="1">
    <citation type="journal article" date="2008" name="J. Bacteriol.">
        <title>The complete genome sequence of Actinobacillus pleuropneumoniae L20 (serotype 5b).</title>
        <authorList>
            <person name="Foote S.J."/>
            <person name="Bosse J.T."/>
            <person name="Bouevitch A.B."/>
            <person name="Langford P.R."/>
            <person name="Young N.M."/>
            <person name="Nash J.H.E."/>
        </authorList>
    </citation>
    <scope>NUCLEOTIDE SEQUENCE [LARGE SCALE GENOMIC DNA]</scope>
    <source>
        <strain>L20</strain>
    </source>
</reference>
<gene>
    <name evidence="1" type="primary">nagZ</name>
    <name type="ordered locus">APL_1111</name>
</gene>
<evidence type="ECO:0000255" key="1">
    <source>
        <dbReference type="HAMAP-Rule" id="MF_00364"/>
    </source>
</evidence>
<name>NAGZ_ACTP2</name>
<keyword id="KW-0131">Cell cycle</keyword>
<keyword id="KW-0132">Cell division</keyword>
<keyword id="KW-0133">Cell shape</keyword>
<keyword id="KW-0961">Cell wall biogenesis/degradation</keyword>
<keyword id="KW-0963">Cytoplasm</keyword>
<keyword id="KW-0326">Glycosidase</keyword>
<keyword id="KW-0378">Hydrolase</keyword>
<keyword id="KW-0573">Peptidoglycan synthesis</keyword>
<keyword id="KW-1185">Reference proteome</keyword>
<sequence length="345" mass="38994">MLLIDIKDKELSQEEVEILEHPLVSGLILFSRNFHDKVQLEALVKSIRQRVKKPLLITVDQEGGRVQRFREGFTKLPAMQAFHTLAKNPQESTALARQTGWLMAAEMFALDIDLSFAPVLDLGHQCKAIGDRSFGENPDAMLPIAEAFIDGMREMGMATTGKHFPGHGHVLADSHLETPFDDRPKEAIFNRDILPFKQLISKGKLSAIMPAHVIYTQCDSQPASGSEYWLKQVLRNQLNFNGVIFSDDLGMKGAGFMGNFVERSEKAIHAGCDLLLLCNEPEGVIQVLDGLKYQPTKTQTERHISLMKRKTVRWNELEASPRYQQAQQRLTALQNDWLEYKAQHC</sequence>
<proteinExistence type="inferred from homology"/>